<accession>Q8CH20</accession>
<accession>B1AX51</accession>
<accession>Q3MSD0</accession>
<accession>Q3MSD1</accession>
<accession>Q6P8T4</accession>
<accession>Q9D4K2</accession>
<accession>Q9D9I2</accession>
<gene>
    <name evidence="3" type="primary">Cypt1</name>
    <name evidence="11" type="synonym">Ckt1r3</name>
    <name evidence="11" type="synonym">Cypt5</name>
</gene>
<name>CYPT1_MOUSE</name>
<feature type="chain" id="PRO_0000442286" description="Cysteine-rich perinuclear theca protein 1">
    <location>
        <begin position="1"/>
        <end position="168"/>
    </location>
</feature>
<feature type="region of interest" description="Disordered" evidence="1">
    <location>
        <begin position="144"/>
        <end position="168"/>
    </location>
</feature>
<feature type="splice variant" id="VSP_059219" description="In isoform 2.">
    <original>L</original>
    <variation>LKVRDP</variation>
    <location>
        <position position="91"/>
    </location>
</feature>
<feature type="sequence conflict" description="In Ref. 4; BAB24782." evidence="4" ref="4">
    <original>Y</original>
    <variation>H</variation>
    <location>
        <position position="71"/>
    </location>
</feature>
<feature type="sequence conflict" description="In Ref. 2; CAJ13850." evidence="4" ref="2">
    <original>F</original>
    <variation>S</variation>
    <location>
        <position position="85"/>
    </location>
</feature>
<feature type="sequence conflict" description="In Ref. 2; CAJ13849." evidence="4" ref="2">
    <original>Q</original>
    <variation>K</variation>
    <location>
        <position position="116"/>
    </location>
</feature>
<feature type="sequence conflict" description="In Ref. 7; AAH61079." evidence="4" ref="7">
    <original>P</original>
    <variation>S</variation>
    <location>
        <position position="130"/>
    </location>
</feature>
<feature type="sequence conflict" description="In Ref. 2; CAJ13850." evidence="4" ref="2">
    <original>E</original>
    <variation>A</variation>
    <location>
        <position position="132"/>
    </location>
</feature>
<feature type="sequence conflict" description="In Ref. 1; CAJ13846 and 4; BAB30253." evidence="4" ref="1 4">
    <original>K</original>
    <variation>R</variation>
    <location sequence="Q8CH20-2">
        <position position="92"/>
    </location>
</feature>
<organism>
    <name type="scientific">Mus musculus</name>
    <name type="common">Mouse</name>
    <dbReference type="NCBI Taxonomy" id="10090"/>
    <lineage>
        <taxon>Eukaryota</taxon>
        <taxon>Metazoa</taxon>
        <taxon>Chordata</taxon>
        <taxon>Craniata</taxon>
        <taxon>Vertebrata</taxon>
        <taxon>Euteleostomi</taxon>
        <taxon>Mammalia</taxon>
        <taxon>Eutheria</taxon>
        <taxon>Euarchontoglires</taxon>
        <taxon>Glires</taxon>
        <taxon>Rodentia</taxon>
        <taxon>Myomorpha</taxon>
        <taxon>Muroidea</taxon>
        <taxon>Muridae</taxon>
        <taxon>Murinae</taxon>
        <taxon>Mus</taxon>
        <taxon>Mus</taxon>
    </lineage>
</organism>
<reference evidence="8" key="1">
    <citation type="journal article" date="2004" name="Biol. Reprod.">
        <title>Characterization of a novel postacrosomal perinuclear theca-specific protein, CYPT1.</title>
        <authorList>
            <person name="Kitamura K."/>
            <person name="Iguchi N."/>
            <person name="Kaneko Y."/>
            <person name="Tanaka H."/>
            <person name="Nishimune Y."/>
        </authorList>
    </citation>
    <scope>NUCLEOTIDE SEQUENCE [MRNA] (ISOFORM 2)</scope>
    <scope>SUBCELLULAR LOCATION</scope>
    <scope>TISSUE SPECIFICITY</scope>
    <scope>DEVELOPMENTAL STAGE</scope>
    <source>
        <strain evidence="8">C3H/He</strain>
        <tissue evidence="8">Testis</tissue>
    </source>
</reference>
<reference evidence="9" key="2">
    <citation type="journal article" date="2006" name="Mol. Reprod. Dev.">
        <title>Identification and expression profiling of 10 novel spermatid expressed CYPT genes.</title>
        <authorList>
            <person name="Hansen M.A."/>
            <person name="Nielsen J.E."/>
            <person name="Tanaka M."/>
            <person name="Almstrup K."/>
            <person name="Skakkebaek N.E."/>
            <person name="Leffers H."/>
        </authorList>
    </citation>
    <scope>NUCLEOTIDE SEQUENCE [MRNA] (ISOFORM 1)</scope>
    <source>
        <strain evidence="9">C3H/He</strain>
        <tissue evidence="9">Testis</tissue>
    </source>
</reference>
<reference evidence="6" key="3">
    <citation type="submission" date="2001-12" db="EMBL/GenBank/DDBJ databases">
        <title>Ck2 differentially phosphorylate a family of novel spermatid-specific basic nuclear proteins.</title>
        <authorList>
            <person name="Xu X."/>
            <person name="Bai X."/>
            <person name="Silvius D."/>
            <person name="Escalier D."/>
            <person name="McFarland L."/>
            <person name="Xu P.-X."/>
        </authorList>
    </citation>
    <scope>NUCLEOTIDE SEQUENCE [MRNA] (ISOFORM 1)</scope>
    <source>
        <strain evidence="6">CD-1</strain>
        <tissue evidence="6">Testis</tissue>
    </source>
</reference>
<reference evidence="7" key="4">
    <citation type="journal article" date="2005" name="Science">
        <title>The transcriptional landscape of the mammalian genome.</title>
        <authorList>
            <person name="Carninci P."/>
            <person name="Kasukawa T."/>
            <person name="Katayama S."/>
            <person name="Gough J."/>
            <person name="Frith M.C."/>
            <person name="Maeda N."/>
            <person name="Oyama R."/>
            <person name="Ravasi T."/>
            <person name="Lenhard B."/>
            <person name="Wells C."/>
            <person name="Kodzius R."/>
            <person name="Shimokawa K."/>
            <person name="Bajic V.B."/>
            <person name="Brenner S.E."/>
            <person name="Batalov S."/>
            <person name="Forrest A.R."/>
            <person name="Zavolan M."/>
            <person name="Davis M.J."/>
            <person name="Wilming L.G."/>
            <person name="Aidinis V."/>
            <person name="Allen J.E."/>
            <person name="Ambesi-Impiombato A."/>
            <person name="Apweiler R."/>
            <person name="Aturaliya R.N."/>
            <person name="Bailey T.L."/>
            <person name="Bansal M."/>
            <person name="Baxter L."/>
            <person name="Beisel K.W."/>
            <person name="Bersano T."/>
            <person name="Bono H."/>
            <person name="Chalk A.M."/>
            <person name="Chiu K.P."/>
            <person name="Choudhary V."/>
            <person name="Christoffels A."/>
            <person name="Clutterbuck D.R."/>
            <person name="Crowe M.L."/>
            <person name="Dalla E."/>
            <person name="Dalrymple B.P."/>
            <person name="de Bono B."/>
            <person name="Della Gatta G."/>
            <person name="di Bernardo D."/>
            <person name="Down T."/>
            <person name="Engstrom P."/>
            <person name="Fagiolini M."/>
            <person name="Faulkner G."/>
            <person name="Fletcher C.F."/>
            <person name="Fukushima T."/>
            <person name="Furuno M."/>
            <person name="Futaki S."/>
            <person name="Gariboldi M."/>
            <person name="Georgii-Hemming P."/>
            <person name="Gingeras T.R."/>
            <person name="Gojobori T."/>
            <person name="Green R.E."/>
            <person name="Gustincich S."/>
            <person name="Harbers M."/>
            <person name="Hayashi Y."/>
            <person name="Hensch T.K."/>
            <person name="Hirokawa N."/>
            <person name="Hill D."/>
            <person name="Huminiecki L."/>
            <person name="Iacono M."/>
            <person name="Ikeo K."/>
            <person name="Iwama A."/>
            <person name="Ishikawa T."/>
            <person name="Jakt M."/>
            <person name="Kanapin A."/>
            <person name="Katoh M."/>
            <person name="Kawasawa Y."/>
            <person name="Kelso J."/>
            <person name="Kitamura H."/>
            <person name="Kitano H."/>
            <person name="Kollias G."/>
            <person name="Krishnan S.P."/>
            <person name="Kruger A."/>
            <person name="Kummerfeld S.K."/>
            <person name="Kurochkin I.V."/>
            <person name="Lareau L.F."/>
            <person name="Lazarevic D."/>
            <person name="Lipovich L."/>
            <person name="Liu J."/>
            <person name="Liuni S."/>
            <person name="McWilliam S."/>
            <person name="Madan Babu M."/>
            <person name="Madera M."/>
            <person name="Marchionni L."/>
            <person name="Matsuda H."/>
            <person name="Matsuzawa S."/>
            <person name="Miki H."/>
            <person name="Mignone F."/>
            <person name="Miyake S."/>
            <person name="Morris K."/>
            <person name="Mottagui-Tabar S."/>
            <person name="Mulder N."/>
            <person name="Nakano N."/>
            <person name="Nakauchi H."/>
            <person name="Ng P."/>
            <person name="Nilsson R."/>
            <person name="Nishiguchi S."/>
            <person name="Nishikawa S."/>
            <person name="Nori F."/>
            <person name="Ohara O."/>
            <person name="Okazaki Y."/>
            <person name="Orlando V."/>
            <person name="Pang K.C."/>
            <person name="Pavan W.J."/>
            <person name="Pavesi G."/>
            <person name="Pesole G."/>
            <person name="Petrovsky N."/>
            <person name="Piazza S."/>
            <person name="Reed J."/>
            <person name="Reid J.F."/>
            <person name="Ring B.Z."/>
            <person name="Ringwald M."/>
            <person name="Rost B."/>
            <person name="Ruan Y."/>
            <person name="Salzberg S.L."/>
            <person name="Sandelin A."/>
            <person name="Schneider C."/>
            <person name="Schoenbach C."/>
            <person name="Sekiguchi K."/>
            <person name="Semple C.A."/>
            <person name="Seno S."/>
            <person name="Sessa L."/>
            <person name="Sheng Y."/>
            <person name="Shibata Y."/>
            <person name="Shimada H."/>
            <person name="Shimada K."/>
            <person name="Silva D."/>
            <person name="Sinclair B."/>
            <person name="Sperling S."/>
            <person name="Stupka E."/>
            <person name="Sugiura K."/>
            <person name="Sultana R."/>
            <person name="Takenaka Y."/>
            <person name="Taki K."/>
            <person name="Tammoja K."/>
            <person name="Tan S.L."/>
            <person name="Tang S."/>
            <person name="Taylor M.S."/>
            <person name="Tegner J."/>
            <person name="Teichmann S.A."/>
            <person name="Ueda H.R."/>
            <person name="van Nimwegen E."/>
            <person name="Verardo R."/>
            <person name="Wei C.L."/>
            <person name="Yagi K."/>
            <person name="Yamanishi H."/>
            <person name="Zabarovsky E."/>
            <person name="Zhu S."/>
            <person name="Zimmer A."/>
            <person name="Hide W."/>
            <person name="Bult C."/>
            <person name="Grimmond S.M."/>
            <person name="Teasdale R.D."/>
            <person name="Liu E.T."/>
            <person name="Brusic V."/>
            <person name="Quackenbush J."/>
            <person name="Wahlestedt C."/>
            <person name="Mattick J.S."/>
            <person name="Hume D.A."/>
            <person name="Kai C."/>
            <person name="Sasaki D."/>
            <person name="Tomaru Y."/>
            <person name="Fukuda S."/>
            <person name="Kanamori-Katayama M."/>
            <person name="Suzuki M."/>
            <person name="Aoki J."/>
            <person name="Arakawa T."/>
            <person name="Iida J."/>
            <person name="Imamura K."/>
            <person name="Itoh M."/>
            <person name="Kato T."/>
            <person name="Kawaji H."/>
            <person name="Kawagashira N."/>
            <person name="Kawashima T."/>
            <person name="Kojima M."/>
            <person name="Kondo S."/>
            <person name="Konno H."/>
            <person name="Nakano K."/>
            <person name="Ninomiya N."/>
            <person name="Nishio T."/>
            <person name="Okada M."/>
            <person name="Plessy C."/>
            <person name="Shibata K."/>
            <person name="Shiraki T."/>
            <person name="Suzuki S."/>
            <person name="Tagami M."/>
            <person name="Waki K."/>
            <person name="Watahiki A."/>
            <person name="Okamura-Oho Y."/>
            <person name="Suzuki H."/>
            <person name="Kawai J."/>
            <person name="Hayashizaki Y."/>
        </authorList>
    </citation>
    <scope>NUCLEOTIDE SEQUENCE [LARGE SCALE MRNA] (ISOFORMS 1 AND 2)</scope>
    <source>
        <strain evidence="7">C57BL/6J</strain>
        <tissue evidence="7">Testis</tissue>
    </source>
</reference>
<reference evidence="12" key="5">
    <citation type="journal article" date="2009" name="PLoS Biol.">
        <title>Lineage-specific biology revealed by a finished genome assembly of the mouse.</title>
        <authorList>
            <person name="Church D.M."/>
            <person name="Goodstadt L."/>
            <person name="Hillier L.W."/>
            <person name="Zody M.C."/>
            <person name="Goldstein S."/>
            <person name="She X."/>
            <person name="Bult C.J."/>
            <person name="Agarwala R."/>
            <person name="Cherry J.L."/>
            <person name="DiCuccio M."/>
            <person name="Hlavina W."/>
            <person name="Kapustin Y."/>
            <person name="Meric P."/>
            <person name="Maglott D."/>
            <person name="Birtle Z."/>
            <person name="Marques A.C."/>
            <person name="Graves T."/>
            <person name="Zhou S."/>
            <person name="Teague B."/>
            <person name="Potamousis K."/>
            <person name="Churas C."/>
            <person name="Place M."/>
            <person name="Herschleb J."/>
            <person name="Runnheim R."/>
            <person name="Forrest D."/>
            <person name="Amos-Landgraf J."/>
            <person name="Schwartz D.C."/>
            <person name="Cheng Z."/>
            <person name="Lindblad-Toh K."/>
            <person name="Eichler E.E."/>
            <person name="Ponting C.P."/>
        </authorList>
    </citation>
    <scope>NUCLEOTIDE SEQUENCE [LARGE SCALE GENOMIC DNA]</scope>
    <source>
        <strain evidence="12">C57BL/6J</strain>
    </source>
</reference>
<reference evidence="10" key="6">
    <citation type="submission" date="2005-07" db="EMBL/GenBank/DDBJ databases">
        <authorList>
            <person name="Mural R.J."/>
            <person name="Adams M.D."/>
            <person name="Myers E.W."/>
            <person name="Smith H.O."/>
            <person name="Venter J.C."/>
        </authorList>
    </citation>
    <scope>NUCLEOTIDE SEQUENCE [LARGE SCALE GENOMIC DNA]</scope>
</reference>
<reference evidence="5" key="7">
    <citation type="journal article" date="2004" name="Genome Res.">
        <title>The status, quality, and expansion of the NIH full-length cDNA project: the Mammalian Gene Collection (MGC).</title>
        <authorList>
            <consortium name="The MGC Project Team"/>
        </authorList>
    </citation>
    <scope>NUCLEOTIDE SEQUENCE [LARGE SCALE MRNA] (ISOFORM 1)</scope>
    <source>
        <tissue evidence="5">Testis</tissue>
    </source>
</reference>
<evidence type="ECO:0000256" key="1">
    <source>
        <dbReference type="SAM" id="MobiDB-lite"/>
    </source>
</evidence>
<evidence type="ECO:0000269" key="2">
    <source>
    </source>
</evidence>
<evidence type="ECO:0000303" key="3">
    <source>
    </source>
</evidence>
<evidence type="ECO:0000305" key="4"/>
<evidence type="ECO:0000312" key="5">
    <source>
        <dbReference type="EMBL" id="AAH61079.1"/>
    </source>
</evidence>
<evidence type="ECO:0000312" key="6">
    <source>
        <dbReference type="EMBL" id="AAO15675.1"/>
    </source>
</evidence>
<evidence type="ECO:0000312" key="7">
    <source>
        <dbReference type="EMBL" id="BAB30253.1"/>
    </source>
</evidence>
<evidence type="ECO:0000312" key="8">
    <source>
        <dbReference type="EMBL" id="CAJ13846.1"/>
    </source>
</evidence>
<evidence type="ECO:0000312" key="9">
    <source>
        <dbReference type="EMBL" id="CAJ13850.1"/>
    </source>
</evidence>
<evidence type="ECO:0000312" key="10">
    <source>
        <dbReference type="EMBL" id="EDL35714.1"/>
    </source>
</evidence>
<evidence type="ECO:0000312" key="11">
    <source>
        <dbReference type="MGI" id="MGI:3616441"/>
    </source>
</evidence>
<evidence type="ECO:0000312" key="12">
    <source>
        <dbReference type="Proteomes" id="UP000000589"/>
    </source>
</evidence>
<sequence>MAQMAKKVHWSSAAAGAAAAAKISKLEKTTKRFKLIKKRNPSSKLPKRSSHSLLCSLSRSCCCCRCRCCCYCRCCRCCCSRSRRFRSRTTLKFFQITEKGEQSLQRRIRRQLTRSQLELIEPEPTMALEPSEITVAFFSHKNANVSDPEEVPPCLDSDPFPNGDLASS</sequence>
<proteinExistence type="evidence at protein level"/>
<protein>
    <recommendedName>
        <fullName evidence="3">Cysteine-rich perinuclear theca protein 1</fullName>
    </recommendedName>
</protein>
<dbReference type="EMBL" id="AM040451">
    <property type="protein sequence ID" value="CAJ13846.1"/>
    <property type="molecule type" value="mRNA"/>
</dbReference>
<dbReference type="EMBL" id="AM040454">
    <property type="protein sequence ID" value="CAJ13849.1"/>
    <property type="molecule type" value="mRNA"/>
</dbReference>
<dbReference type="EMBL" id="AM040455">
    <property type="protein sequence ID" value="CAJ13850.1"/>
    <property type="molecule type" value="mRNA"/>
</dbReference>
<dbReference type="EMBL" id="AF463502">
    <property type="protein sequence ID" value="AAO15675.1"/>
    <property type="molecule type" value="mRNA"/>
</dbReference>
<dbReference type="EMBL" id="AK006892">
    <property type="protein sequence ID" value="BAB24782.1"/>
    <property type="molecule type" value="mRNA"/>
</dbReference>
<dbReference type="EMBL" id="AK016467">
    <property type="protein sequence ID" value="BAB30253.1"/>
    <property type="molecule type" value="mRNA"/>
</dbReference>
<dbReference type="EMBL" id="AL805907">
    <property type="status" value="NOT_ANNOTATED_CDS"/>
    <property type="molecule type" value="Genomic_DNA"/>
</dbReference>
<dbReference type="EMBL" id="CH466584">
    <property type="protein sequence ID" value="EDL35714.1"/>
    <property type="molecule type" value="Genomic_DNA"/>
</dbReference>
<dbReference type="EMBL" id="CH466584">
    <property type="protein sequence ID" value="EDL35715.1"/>
    <property type="molecule type" value="Genomic_DNA"/>
</dbReference>
<dbReference type="EMBL" id="BC061079">
    <property type="protein sequence ID" value="AAH61079.1"/>
    <property type="molecule type" value="mRNA"/>
</dbReference>
<dbReference type="CCDS" id="CCDS40880.1">
    <molecule id="Q8CH20-2"/>
</dbReference>
<dbReference type="CCDS" id="CCDS81101.1">
    <molecule id="Q8CH20-1"/>
</dbReference>
<dbReference type="RefSeq" id="NP_001297390.1">
    <molecule id="Q8CH20-1"/>
    <property type="nucleotide sequence ID" value="NM_001310461.1"/>
</dbReference>
<dbReference type="RefSeq" id="NP_080014.2">
    <molecule id="Q8CH20-2"/>
    <property type="nucleotide sequence ID" value="NM_025738.3"/>
</dbReference>
<dbReference type="SMR" id="Q8CH20"/>
<dbReference type="FunCoup" id="Q8CH20">
    <property type="interactions" value="24"/>
</dbReference>
<dbReference type="STRING" id="10090.ENSMUSP00000024026"/>
<dbReference type="SwissPalm" id="Q8CH20"/>
<dbReference type="PaxDb" id="10090-ENSMUSP00000024026"/>
<dbReference type="ProteomicsDB" id="279255">
    <molecule id="Q8CH20-1"/>
</dbReference>
<dbReference type="ProteomicsDB" id="279256">
    <molecule id="Q8CH20-2"/>
</dbReference>
<dbReference type="DNASU" id="66742"/>
<dbReference type="Ensembl" id="ENSMUST00000024026.4">
    <molecule id="Q8CH20-2"/>
    <property type="protein sequence ID" value="ENSMUSP00000024026.3"/>
    <property type="gene ID" value="ENSMUSG00000023257.4"/>
</dbReference>
<dbReference type="Ensembl" id="ENSMUST00000115422.2">
    <molecule id="Q8CH20-1"/>
    <property type="protein sequence ID" value="ENSMUSP00000111082.2"/>
    <property type="gene ID" value="ENSMUSG00000023257.4"/>
</dbReference>
<dbReference type="GeneID" id="66742"/>
<dbReference type="KEGG" id="mmu:66742"/>
<dbReference type="AGR" id="MGI:3616441"/>
<dbReference type="CTD" id="66742"/>
<dbReference type="MGI" id="MGI:3616441">
    <property type="gene designation" value="Cypt1"/>
</dbReference>
<dbReference type="VEuPathDB" id="HostDB:ENSMUSG00000023257"/>
<dbReference type="GeneTree" id="ENSGT00390000016779"/>
<dbReference type="HOGENOM" id="CLU_1585937_0_0_1"/>
<dbReference type="InParanoid" id="Q8CH20"/>
<dbReference type="OrthoDB" id="96556at9989"/>
<dbReference type="TreeFam" id="TF339928"/>
<dbReference type="BioGRID-ORCS" id="66742">
    <property type="hits" value="2 hits in 77 CRISPR screens"/>
</dbReference>
<dbReference type="PRO" id="PR:Q8CH20"/>
<dbReference type="Proteomes" id="UP000000589">
    <property type="component" value="Chromosome X"/>
</dbReference>
<dbReference type="RNAct" id="Q8CH20">
    <property type="molecule type" value="protein"/>
</dbReference>
<dbReference type="Bgee" id="ENSMUSG00000023257">
    <property type="expression patterns" value="Expressed in spermatid and 6 other cell types or tissues"/>
</dbReference>
<dbReference type="GO" id="GO:0001669">
    <property type="term" value="C:acrosomal vesicle"/>
    <property type="evidence" value="ECO:0000314"/>
    <property type="project" value="MGI"/>
</dbReference>
<dbReference type="GO" id="GO:0033011">
    <property type="term" value="C:perinuclear theca"/>
    <property type="evidence" value="ECO:0007669"/>
    <property type="project" value="UniProtKB-SubCell"/>
</dbReference>
<comment type="subcellular location">
    <subcellularLocation>
        <location evidence="2">Cytoplasm</location>
        <location evidence="2">Cytoskeleton</location>
        <location evidence="2">Perinuclear theca</location>
    </subcellularLocation>
    <text evidence="2">Found in the postacrosomal region of the perinuclear theca.</text>
</comment>
<comment type="alternative products">
    <event type="alternative splicing"/>
    <isoform>
        <id>Q8CH20-1</id>
        <name>1</name>
        <sequence type="displayed"/>
    </isoform>
    <isoform>
        <id>Q8CH20-2</id>
        <name>2</name>
        <sequence type="described" ref="VSP_059219"/>
    </isoform>
</comment>
<comment type="tissue specificity">
    <text evidence="2">Specifically expressed in spermatozoa (at protein level). Detected from the elongated spermatid stage onwards; not found in immature germ cells or somatic cells (at protein level).</text>
</comment>
<comment type="developmental stage">
    <text evidence="2">Detected from 29 days postpartum onwards, with increasing expression through to the adult stage.</text>
</comment>
<keyword id="KW-0025">Alternative splicing</keyword>
<keyword id="KW-0963">Cytoplasm</keyword>
<keyword id="KW-0206">Cytoskeleton</keyword>
<keyword id="KW-1185">Reference proteome</keyword>